<gene>
    <name evidence="1" type="primary">recF</name>
    <name type="ordered locus">ECA4439</name>
</gene>
<sequence>MALTRLLIKDFRNIEAADLALVPGFNFLVGANGSGKTSVLEAIYTLGHGRAFRSIQAGRVIRHDQPEFVLHGRIDGTETERAVGLSKNRQGDSKVRIDGSDGHKVAELAQLLPIQLITPEGFTLLNGGPKYRRAFLDWGCFHNEPGFFAAWSNMKRLQRQRNAALRQVSHYGQLRAWDQELVPLAERISEWRAQYSAAIANDIAATCTQFLPEFSLSFSFQRGWDKESEYAELLERQFERDRMLGYTALGPHKADFRIRTSGVAVEDMLSRGQLKLLMCALRLAQGEFLTRQNGLRCLYLIDDFASELDSTRRRLLAERLKATHAQVFVSAVSAEQIEDMIGEKGKMFRVEQGKITVQSQD</sequence>
<evidence type="ECO:0000255" key="1">
    <source>
        <dbReference type="HAMAP-Rule" id="MF_00365"/>
    </source>
</evidence>
<dbReference type="EMBL" id="BX950851">
    <property type="protein sequence ID" value="CAG77335.1"/>
    <property type="molecule type" value="Genomic_DNA"/>
</dbReference>
<dbReference type="RefSeq" id="WP_011095898.1">
    <property type="nucleotide sequence ID" value="NC_004547.2"/>
</dbReference>
<dbReference type="SMR" id="Q6CYR6"/>
<dbReference type="STRING" id="218491.ECA4439"/>
<dbReference type="KEGG" id="eca:ECA4439"/>
<dbReference type="PATRIC" id="fig|218491.5.peg.4527"/>
<dbReference type="eggNOG" id="COG1195">
    <property type="taxonomic scope" value="Bacteria"/>
</dbReference>
<dbReference type="HOGENOM" id="CLU_040267_0_0_6"/>
<dbReference type="OrthoDB" id="9803889at2"/>
<dbReference type="Proteomes" id="UP000007966">
    <property type="component" value="Chromosome"/>
</dbReference>
<dbReference type="GO" id="GO:0005737">
    <property type="term" value="C:cytoplasm"/>
    <property type="evidence" value="ECO:0007669"/>
    <property type="project" value="UniProtKB-SubCell"/>
</dbReference>
<dbReference type="GO" id="GO:0005524">
    <property type="term" value="F:ATP binding"/>
    <property type="evidence" value="ECO:0007669"/>
    <property type="project" value="UniProtKB-UniRule"/>
</dbReference>
<dbReference type="GO" id="GO:0003697">
    <property type="term" value="F:single-stranded DNA binding"/>
    <property type="evidence" value="ECO:0007669"/>
    <property type="project" value="UniProtKB-UniRule"/>
</dbReference>
<dbReference type="GO" id="GO:0006260">
    <property type="term" value="P:DNA replication"/>
    <property type="evidence" value="ECO:0007669"/>
    <property type="project" value="UniProtKB-UniRule"/>
</dbReference>
<dbReference type="GO" id="GO:0000731">
    <property type="term" value="P:DNA synthesis involved in DNA repair"/>
    <property type="evidence" value="ECO:0007669"/>
    <property type="project" value="TreeGrafter"/>
</dbReference>
<dbReference type="GO" id="GO:0006302">
    <property type="term" value="P:double-strand break repair"/>
    <property type="evidence" value="ECO:0007669"/>
    <property type="project" value="TreeGrafter"/>
</dbReference>
<dbReference type="GO" id="GO:0009432">
    <property type="term" value="P:SOS response"/>
    <property type="evidence" value="ECO:0007669"/>
    <property type="project" value="UniProtKB-UniRule"/>
</dbReference>
<dbReference type="FunFam" id="1.20.1050.90:FF:000001">
    <property type="entry name" value="DNA replication and repair protein RecF"/>
    <property type="match status" value="1"/>
</dbReference>
<dbReference type="Gene3D" id="3.40.50.300">
    <property type="entry name" value="P-loop containing nucleotide triphosphate hydrolases"/>
    <property type="match status" value="1"/>
</dbReference>
<dbReference type="Gene3D" id="1.20.1050.90">
    <property type="entry name" value="RecF/RecN/SMC, N-terminal domain"/>
    <property type="match status" value="1"/>
</dbReference>
<dbReference type="HAMAP" id="MF_00365">
    <property type="entry name" value="RecF"/>
    <property type="match status" value="1"/>
</dbReference>
<dbReference type="InterPro" id="IPR001238">
    <property type="entry name" value="DNA-binding_RecF"/>
</dbReference>
<dbReference type="InterPro" id="IPR018078">
    <property type="entry name" value="DNA-binding_RecF_CS"/>
</dbReference>
<dbReference type="InterPro" id="IPR027417">
    <property type="entry name" value="P-loop_NTPase"/>
</dbReference>
<dbReference type="InterPro" id="IPR003395">
    <property type="entry name" value="RecF/RecN/SMC_N"/>
</dbReference>
<dbReference type="InterPro" id="IPR042174">
    <property type="entry name" value="RecF_2"/>
</dbReference>
<dbReference type="NCBIfam" id="TIGR00611">
    <property type="entry name" value="recf"/>
    <property type="match status" value="1"/>
</dbReference>
<dbReference type="PANTHER" id="PTHR32182">
    <property type="entry name" value="DNA REPLICATION AND REPAIR PROTEIN RECF"/>
    <property type="match status" value="1"/>
</dbReference>
<dbReference type="PANTHER" id="PTHR32182:SF0">
    <property type="entry name" value="DNA REPLICATION AND REPAIR PROTEIN RECF"/>
    <property type="match status" value="1"/>
</dbReference>
<dbReference type="Pfam" id="PF02463">
    <property type="entry name" value="SMC_N"/>
    <property type="match status" value="1"/>
</dbReference>
<dbReference type="SUPFAM" id="SSF52540">
    <property type="entry name" value="P-loop containing nucleoside triphosphate hydrolases"/>
    <property type="match status" value="1"/>
</dbReference>
<dbReference type="PROSITE" id="PS00617">
    <property type="entry name" value="RECF_1"/>
    <property type="match status" value="1"/>
</dbReference>
<dbReference type="PROSITE" id="PS00618">
    <property type="entry name" value="RECF_2"/>
    <property type="match status" value="1"/>
</dbReference>
<comment type="function">
    <text evidence="1">The RecF protein is involved in DNA metabolism; it is required for DNA replication and normal SOS inducibility. RecF binds preferentially to single-stranded, linear DNA. It also seems to bind ATP.</text>
</comment>
<comment type="subcellular location">
    <subcellularLocation>
        <location evidence="1">Cytoplasm</location>
    </subcellularLocation>
</comment>
<comment type="similarity">
    <text evidence="1">Belongs to the RecF family.</text>
</comment>
<keyword id="KW-0067">ATP-binding</keyword>
<keyword id="KW-0963">Cytoplasm</keyword>
<keyword id="KW-0227">DNA damage</keyword>
<keyword id="KW-0234">DNA repair</keyword>
<keyword id="KW-0235">DNA replication</keyword>
<keyword id="KW-0238">DNA-binding</keyword>
<keyword id="KW-0547">Nucleotide-binding</keyword>
<keyword id="KW-1185">Reference proteome</keyword>
<keyword id="KW-0742">SOS response</keyword>
<feature type="chain" id="PRO_0000236117" description="DNA replication and repair protein RecF">
    <location>
        <begin position="1"/>
        <end position="361"/>
    </location>
</feature>
<feature type="binding site" evidence="1">
    <location>
        <begin position="30"/>
        <end position="37"/>
    </location>
    <ligand>
        <name>ATP</name>
        <dbReference type="ChEBI" id="CHEBI:30616"/>
    </ligand>
</feature>
<reference key="1">
    <citation type="journal article" date="2004" name="Proc. Natl. Acad. Sci. U.S.A.">
        <title>Genome sequence of the enterobacterial phytopathogen Erwinia carotovora subsp. atroseptica and characterization of virulence factors.</title>
        <authorList>
            <person name="Bell K.S."/>
            <person name="Sebaihia M."/>
            <person name="Pritchard L."/>
            <person name="Holden M.T.G."/>
            <person name="Hyman L.J."/>
            <person name="Holeva M.C."/>
            <person name="Thomson N.R."/>
            <person name="Bentley S.D."/>
            <person name="Churcher L.J.C."/>
            <person name="Mungall K."/>
            <person name="Atkin R."/>
            <person name="Bason N."/>
            <person name="Brooks K."/>
            <person name="Chillingworth T."/>
            <person name="Clark K."/>
            <person name="Doggett J."/>
            <person name="Fraser A."/>
            <person name="Hance Z."/>
            <person name="Hauser H."/>
            <person name="Jagels K."/>
            <person name="Moule S."/>
            <person name="Norbertczak H."/>
            <person name="Ormond D."/>
            <person name="Price C."/>
            <person name="Quail M.A."/>
            <person name="Sanders M."/>
            <person name="Walker D."/>
            <person name="Whitehead S."/>
            <person name="Salmond G.P.C."/>
            <person name="Birch P.R.J."/>
            <person name="Parkhill J."/>
            <person name="Toth I.K."/>
        </authorList>
    </citation>
    <scope>NUCLEOTIDE SEQUENCE [LARGE SCALE GENOMIC DNA]</scope>
    <source>
        <strain>SCRI 1043 / ATCC BAA-672</strain>
    </source>
</reference>
<organism>
    <name type="scientific">Pectobacterium atrosepticum (strain SCRI 1043 / ATCC BAA-672)</name>
    <name type="common">Erwinia carotovora subsp. atroseptica</name>
    <dbReference type="NCBI Taxonomy" id="218491"/>
    <lineage>
        <taxon>Bacteria</taxon>
        <taxon>Pseudomonadati</taxon>
        <taxon>Pseudomonadota</taxon>
        <taxon>Gammaproteobacteria</taxon>
        <taxon>Enterobacterales</taxon>
        <taxon>Pectobacteriaceae</taxon>
        <taxon>Pectobacterium</taxon>
    </lineage>
</organism>
<accession>Q6CYR6</accession>
<protein>
    <recommendedName>
        <fullName evidence="1">DNA replication and repair protein RecF</fullName>
    </recommendedName>
</protein>
<proteinExistence type="inferred from homology"/>
<name>RECF_PECAS</name>